<gene>
    <name evidence="1" type="primary">nuoK</name>
    <name type="ordered locus">BUsg_156</name>
</gene>
<proteinExistence type="inferred from homology"/>
<accession>Q8K9X8</accession>
<reference key="1">
    <citation type="journal article" date="2002" name="Science">
        <title>50 million years of genomic stasis in endosymbiotic bacteria.</title>
        <authorList>
            <person name="Tamas I."/>
            <person name="Klasson L."/>
            <person name="Canbaeck B."/>
            <person name="Naeslund A.K."/>
            <person name="Eriksson A.-S."/>
            <person name="Wernegreen J.J."/>
            <person name="Sandstroem J.P."/>
            <person name="Moran N.A."/>
            <person name="Andersson S.G.E."/>
        </authorList>
    </citation>
    <scope>NUCLEOTIDE SEQUENCE [LARGE SCALE GENOMIC DNA]</scope>
    <source>
        <strain>Sg</strain>
    </source>
</reference>
<feature type="chain" id="PRO_0000118529" description="NADH-quinone oxidoreductase subunit K">
    <location>
        <begin position="1"/>
        <end position="100"/>
    </location>
</feature>
<feature type="transmembrane region" description="Helical" evidence="1">
    <location>
        <begin position="4"/>
        <end position="24"/>
    </location>
</feature>
<feature type="transmembrane region" description="Helical" evidence="1">
    <location>
        <begin position="28"/>
        <end position="48"/>
    </location>
</feature>
<feature type="transmembrane region" description="Helical" evidence="1">
    <location>
        <begin position="60"/>
        <end position="80"/>
    </location>
</feature>
<keyword id="KW-1003">Cell membrane</keyword>
<keyword id="KW-0472">Membrane</keyword>
<keyword id="KW-0520">NAD</keyword>
<keyword id="KW-0874">Quinone</keyword>
<keyword id="KW-1278">Translocase</keyword>
<keyword id="KW-0812">Transmembrane</keyword>
<keyword id="KW-1133">Transmembrane helix</keyword>
<keyword id="KW-0813">Transport</keyword>
<keyword id="KW-0830">Ubiquinone</keyword>
<comment type="function">
    <text evidence="1">NDH-1 shuttles electrons from NADH, via FMN and iron-sulfur (Fe-S) centers, to quinones in the respiratory chain. The immediate electron acceptor for the enzyme in this species is believed to be ubiquinone. Couples the redox reaction to proton translocation (for every two electrons transferred, four hydrogen ions are translocated across the cytoplasmic membrane), and thus conserves the redox energy in a proton gradient.</text>
</comment>
<comment type="catalytic activity">
    <reaction evidence="1">
        <text>a quinone + NADH + 5 H(+)(in) = a quinol + NAD(+) + 4 H(+)(out)</text>
        <dbReference type="Rhea" id="RHEA:57888"/>
        <dbReference type="ChEBI" id="CHEBI:15378"/>
        <dbReference type="ChEBI" id="CHEBI:24646"/>
        <dbReference type="ChEBI" id="CHEBI:57540"/>
        <dbReference type="ChEBI" id="CHEBI:57945"/>
        <dbReference type="ChEBI" id="CHEBI:132124"/>
    </reaction>
</comment>
<comment type="subunit">
    <text evidence="1">NDH-1 is composed of 13 different subunits. Subunits NuoA, H, J, K, L, M, N constitute the membrane sector of the complex.</text>
</comment>
<comment type="subcellular location">
    <subcellularLocation>
        <location evidence="1">Cell membrane</location>
        <topology evidence="1">Multi-pass membrane protein</topology>
    </subcellularLocation>
</comment>
<comment type="similarity">
    <text evidence="1">Belongs to the complex I subunit 4L family.</text>
</comment>
<name>NUOK_BUCAP</name>
<dbReference type="EC" id="7.1.1.-" evidence="1"/>
<dbReference type="EMBL" id="AE013218">
    <property type="protein sequence ID" value="AAM67724.1"/>
    <property type="molecule type" value="Genomic_DNA"/>
</dbReference>
<dbReference type="RefSeq" id="WP_011053691.1">
    <property type="nucleotide sequence ID" value="NC_004061.1"/>
</dbReference>
<dbReference type="SMR" id="Q8K9X8"/>
<dbReference type="STRING" id="198804.BUsg_156"/>
<dbReference type="GeneID" id="93003626"/>
<dbReference type="KEGG" id="bas:BUsg_156"/>
<dbReference type="eggNOG" id="COG0713">
    <property type="taxonomic scope" value="Bacteria"/>
</dbReference>
<dbReference type="HOGENOM" id="CLU_144724_0_1_6"/>
<dbReference type="Proteomes" id="UP000000416">
    <property type="component" value="Chromosome"/>
</dbReference>
<dbReference type="GO" id="GO:0030964">
    <property type="term" value="C:NADH dehydrogenase complex"/>
    <property type="evidence" value="ECO:0007669"/>
    <property type="project" value="TreeGrafter"/>
</dbReference>
<dbReference type="GO" id="GO:0005886">
    <property type="term" value="C:plasma membrane"/>
    <property type="evidence" value="ECO:0007669"/>
    <property type="project" value="UniProtKB-SubCell"/>
</dbReference>
<dbReference type="GO" id="GO:0050136">
    <property type="term" value="F:NADH:ubiquinone reductase (non-electrogenic) activity"/>
    <property type="evidence" value="ECO:0007669"/>
    <property type="project" value="UniProtKB-UniRule"/>
</dbReference>
<dbReference type="GO" id="GO:0048038">
    <property type="term" value="F:quinone binding"/>
    <property type="evidence" value="ECO:0007669"/>
    <property type="project" value="UniProtKB-KW"/>
</dbReference>
<dbReference type="GO" id="GO:0042773">
    <property type="term" value="P:ATP synthesis coupled electron transport"/>
    <property type="evidence" value="ECO:0007669"/>
    <property type="project" value="InterPro"/>
</dbReference>
<dbReference type="FunFam" id="1.10.287.3510:FF:000001">
    <property type="entry name" value="NADH-quinone oxidoreductase subunit K"/>
    <property type="match status" value="1"/>
</dbReference>
<dbReference type="Gene3D" id="1.10.287.3510">
    <property type="match status" value="1"/>
</dbReference>
<dbReference type="HAMAP" id="MF_01456">
    <property type="entry name" value="NDH1_NuoK"/>
    <property type="match status" value="1"/>
</dbReference>
<dbReference type="InterPro" id="IPR001133">
    <property type="entry name" value="NADH_UbQ_OxRdtase_chain4L/K"/>
</dbReference>
<dbReference type="InterPro" id="IPR039428">
    <property type="entry name" value="NUOK/Mnh_C1-like"/>
</dbReference>
<dbReference type="NCBIfam" id="NF004319">
    <property type="entry name" value="PRK05715.1-1"/>
    <property type="match status" value="1"/>
</dbReference>
<dbReference type="NCBIfam" id="NF004320">
    <property type="entry name" value="PRK05715.1-2"/>
    <property type="match status" value="1"/>
</dbReference>
<dbReference type="PANTHER" id="PTHR11434:SF16">
    <property type="entry name" value="NADH-UBIQUINONE OXIDOREDUCTASE CHAIN 4L"/>
    <property type="match status" value="1"/>
</dbReference>
<dbReference type="PANTHER" id="PTHR11434">
    <property type="entry name" value="NADH-UBIQUINONE OXIDOREDUCTASE SUBUNIT ND4L"/>
    <property type="match status" value="1"/>
</dbReference>
<dbReference type="Pfam" id="PF00420">
    <property type="entry name" value="Oxidored_q2"/>
    <property type="match status" value="1"/>
</dbReference>
<protein>
    <recommendedName>
        <fullName evidence="1">NADH-quinone oxidoreductase subunit K</fullName>
        <ecNumber evidence="1">7.1.1.-</ecNumber>
    </recommendedName>
    <alternativeName>
        <fullName evidence="1">NADH dehydrogenase I subunit K</fullName>
    </alternativeName>
    <alternativeName>
        <fullName evidence="1">NDH-1 subunit K</fullName>
    </alternativeName>
</protein>
<evidence type="ECO:0000255" key="1">
    <source>
        <dbReference type="HAMAP-Rule" id="MF_01456"/>
    </source>
</evidence>
<organism>
    <name type="scientific">Buchnera aphidicola subsp. Schizaphis graminum (strain Sg)</name>
    <dbReference type="NCBI Taxonomy" id="198804"/>
    <lineage>
        <taxon>Bacteria</taxon>
        <taxon>Pseudomonadati</taxon>
        <taxon>Pseudomonadota</taxon>
        <taxon>Gammaproteobacteria</taxon>
        <taxon>Enterobacterales</taxon>
        <taxon>Erwiniaceae</taxon>
        <taxon>Buchnera</taxon>
    </lineage>
</organism>
<sequence length="100" mass="11060">MISLFHGLFLSLILFILGLTSLIVRRNILFMLISLEIMMNAAALALVVSGSYWKQSDGQIMYILAITLAASEASIALALLLQLYRRQRTLNINALSEMSG</sequence>